<organism>
    <name type="scientific">Kluyveromyces lactis (strain ATCC 8585 / CBS 2359 / DSM 70799 / NBRC 1267 / NRRL Y-1140 / WM37)</name>
    <name type="common">Yeast</name>
    <name type="synonym">Candida sphaerica</name>
    <dbReference type="NCBI Taxonomy" id="284590"/>
    <lineage>
        <taxon>Eukaryota</taxon>
        <taxon>Fungi</taxon>
        <taxon>Dikarya</taxon>
        <taxon>Ascomycota</taxon>
        <taxon>Saccharomycotina</taxon>
        <taxon>Saccharomycetes</taxon>
        <taxon>Saccharomycetales</taxon>
        <taxon>Saccharomycetaceae</taxon>
        <taxon>Kluyveromyces</taxon>
    </lineage>
</organism>
<dbReference type="EC" id="4.1.1.130" evidence="1"/>
<dbReference type="EMBL" id="CR382124">
    <property type="protein sequence ID" value="CAH00993.1"/>
    <property type="molecule type" value="Genomic_DNA"/>
</dbReference>
<dbReference type="RefSeq" id="XP_453897.1">
    <property type="nucleotide sequence ID" value="XM_453897.1"/>
</dbReference>
<dbReference type="SMR" id="Q6CQ92"/>
<dbReference type="FunCoup" id="Q6CQ92">
    <property type="interactions" value="555"/>
</dbReference>
<dbReference type="STRING" id="284590.Q6CQ92"/>
<dbReference type="PaxDb" id="284590-Q6CQ92"/>
<dbReference type="KEGG" id="kla:KLLA0_D18865g"/>
<dbReference type="eggNOG" id="KOG3244">
    <property type="taxonomic scope" value="Eukaryota"/>
</dbReference>
<dbReference type="HOGENOM" id="CLU_061241_0_2_1"/>
<dbReference type="InParanoid" id="Q6CQ92"/>
<dbReference type="OMA" id="YYERHFH"/>
<dbReference type="UniPathway" id="UPA00232"/>
<dbReference type="Proteomes" id="UP000000598">
    <property type="component" value="Chromosome D"/>
</dbReference>
<dbReference type="GO" id="GO:0031314">
    <property type="term" value="C:extrinsic component of mitochondrial inner membrane"/>
    <property type="evidence" value="ECO:0007669"/>
    <property type="project" value="UniProtKB-UniRule"/>
</dbReference>
<dbReference type="GO" id="GO:0006744">
    <property type="term" value="P:ubiquinone biosynthetic process"/>
    <property type="evidence" value="ECO:0007669"/>
    <property type="project" value="UniProtKB-UniRule"/>
</dbReference>
<dbReference type="HAMAP" id="MF_03111">
    <property type="entry name" value="Coq4"/>
    <property type="match status" value="1"/>
</dbReference>
<dbReference type="InterPro" id="IPR007715">
    <property type="entry name" value="Coq4"/>
</dbReference>
<dbReference type="InterPro" id="IPR027540">
    <property type="entry name" value="Coq4_euk"/>
</dbReference>
<dbReference type="PANTHER" id="PTHR12922">
    <property type="entry name" value="UBIQUINONE BIOSYNTHESIS PROTEIN"/>
    <property type="match status" value="1"/>
</dbReference>
<dbReference type="PANTHER" id="PTHR12922:SF7">
    <property type="entry name" value="UBIQUINONE BIOSYNTHESIS PROTEIN COQ4 HOMOLOG, MITOCHONDRIAL"/>
    <property type="match status" value="1"/>
</dbReference>
<dbReference type="Pfam" id="PF05019">
    <property type="entry name" value="Coq4"/>
    <property type="match status" value="1"/>
</dbReference>
<name>COQ4_KLULA</name>
<gene>
    <name evidence="1" type="primary">COQ4</name>
    <name type="ordered locus">KLLA0D18865g</name>
</gene>
<proteinExistence type="inferred from homology"/>
<comment type="function">
    <text evidence="1">Lyase that catalyzes the C1-decarboxylation of 4-hydroxy-3-methoxy-5-(all-trans-polyprenyl)benzoic acid into 2-methoxy-6-(all-trans-polyprenyl)phenol during ubiquinone biosynthesis.</text>
</comment>
<comment type="catalytic activity">
    <reaction evidence="1">
        <text>a 4-hydroxy-3-methoxy-5-(all-trans-polyprenyl)benzoate + H(+) = a 2-methoxy-6-(all-trans-polyprenyl)phenol + CO2</text>
        <dbReference type="Rhea" id="RHEA:81179"/>
        <dbReference type="Rhea" id="RHEA-COMP:9551"/>
        <dbReference type="Rhea" id="RHEA-COMP:10931"/>
        <dbReference type="ChEBI" id="CHEBI:15378"/>
        <dbReference type="ChEBI" id="CHEBI:16526"/>
        <dbReference type="ChEBI" id="CHEBI:62731"/>
        <dbReference type="ChEBI" id="CHEBI:84443"/>
        <dbReference type="EC" id="4.1.1.130"/>
    </reaction>
</comment>
<comment type="cofactor">
    <cofactor evidence="1">
        <name>Zn(2+)</name>
        <dbReference type="ChEBI" id="CHEBI:29105"/>
    </cofactor>
</comment>
<comment type="pathway">
    <text evidence="1">Cofactor biosynthesis; ubiquinone biosynthesis.</text>
</comment>
<comment type="subunit">
    <text evidence="1">Component of a multi-subunit COQ enzyme complex, composed of at least COQ3, COQ4, COQ5, COQ6, COQ7 and COQ9.</text>
</comment>
<comment type="subcellular location">
    <subcellularLocation>
        <location evidence="1">Mitochondrion inner membrane</location>
        <topology evidence="1">Peripheral membrane protein</topology>
        <orientation evidence="1">Matrix side</orientation>
    </subcellularLocation>
</comment>
<comment type="similarity">
    <text evidence="1">Belongs to the COQ4 family.</text>
</comment>
<protein>
    <recommendedName>
        <fullName evidence="1">Ubiquinone biosynthesis protein COQ4, mitochondrial</fullName>
    </recommendedName>
    <alternativeName>
        <fullName>4-hydroxy-3-methoxy-5-polyprenylbenzoate decarboxylase</fullName>
        <ecNumber evidence="1">4.1.1.130</ecNumber>
    </alternativeName>
    <alternativeName>
        <fullName evidence="1">Coenzyme Q biosynthesis protein 4</fullName>
    </alternativeName>
</protein>
<accession>Q6CQ92</accession>
<evidence type="ECO:0000255" key="1">
    <source>
        <dbReference type="HAMAP-Rule" id="MF_03111"/>
    </source>
</evidence>
<reference key="1">
    <citation type="journal article" date="2004" name="Nature">
        <title>Genome evolution in yeasts.</title>
        <authorList>
            <person name="Dujon B."/>
            <person name="Sherman D."/>
            <person name="Fischer G."/>
            <person name="Durrens P."/>
            <person name="Casaregola S."/>
            <person name="Lafontaine I."/>
            <person name="de Montigny J."/>
            <person name="Marck C."/>
            <person name="Neuveglise C."/>
            <person name="Talla E."/>
            <person name="Goffard N."/>
            <person name="Frangeul L."/>
            <person name="Aigle M."/>
            <person name="Anthouard V."/>
            <person name="Babour A."/>
            <person name="Barbe V."/>
            <person name="Barnay S."/>
            <person name="Blanchin S."/>
            <person name="Beckerich J.-M."/>
            <person name="Beyne E."/>
            <person name="Bleykasten C."/>
            <person name="Boisrame A."/>
            <person name="Boyer J."/>
            <person name="Cattolico L."/>
            <person name="Confanioleri F."/>
            <person name="de Daruvar A."/>
            <person name="Despons L."/>
            <person name="Fabre E."/>
            <person name="Fairhead C."/>
            <person name="Ferry-Dumazet H."/>
            <person name="Groppi A."/>
            <person name="Hantraye F."/>
            <person name="Hennequin C."/>
            <person name="Jauniaux N."/>
            <person name="Joyet P."/>
            <person name="Kachouri R."/>
            <person name="Kerrest A."/>
            <person name="Koszul R."/>
            <person name="Lemaire M."/>
            <person name="Lesur I."/>
            <person name="Ma L."/>
            <person name="Muller H."/>
            <person name="Nicaud J.-M."/>
            <person name="Nikolski M."/>
            <person name="Oztas S."/>
            <person name="Ozier-Kalogeropoulos O."/>
            <person name="Pellenz S."/>
            <person name="Potier S."/>
            <person name="Richard G.-F."/>
            <person name="Straub M.-L."/>
            <person name="Suleau A."/>
            <person name="Swennen D."/>
            <person name="Tekaia F."/>
            <person name="Wesolowski-Louvel M."/>
            <person name="Westhof E."/>
            <person name="Wirth B."/>
            <person name="Zeniou-Meyer M."/>
            <person name="Zivanovic Y."/>
            <person name="Bolotin-Fukuhara M."/>
            <person name="Thierry A."/>
            <person name="Bouchier C."/>
            <person name="Caudron B."/>
            <person name="Scarpelli C."/>
            <person name="Gaillardin C."/>
            <person name="Weissenbach J."/>
            <person name="Wincker P."/>
            <person name="Souciet J.-L."/>
        </authorList>
    </citation>
    <scope>NUCLEOTIDE SEQUENCE [LARGE SCALE GENOMIC DNA]</scope>
    <source>
        <strain>ATCC 8585 / CBS 2359 / DSM 70799 / NBRC 1267 / NRRL Y-1140 / WM37</strain>
    </source>
</reference>
<keyword id="KW-0456">Lyase</keyword>
<keyword id="KW-0472">Membrane</keyword>
<keyword id="KW-0479">Metal-binding</keyword>
<keyword id="KW-0496">Mitochondrion</keyword>
<keyword id="KW-0999">Mitochondrion inner membrane</keyword>
<keyword id="KW-1185">Reference proteome</keyword>
<keyword id="KW-0809">Transit peptide</keyword>
<keyword id="KW-0831">Ubiquinone biosynthesis</keyword>
<keyword id="KW-0862">Zinc</keyword>
<sequence>MFTVSKKSLQASRNAFSPLNNSKRTIVFTAIAAFGDLLIGKDVRLADAMEKGNLHNKNGEYEHKMEQRTQERLNALRNTRPIEPNYEGHVPLWWYERMMLFGISGLKSYFHPENGENIVQLGEATALPCFLESLKRTMLLDKTGRRILQDRPNITSESLDMERLSKMDKNSVGYTYYKWLMKEGVSPDTRAPVTYIDDPVHAFIFKRYRQCHDFYHAINDLPIIIEGEIAVKAFEASNIGVPMAALGALLAPLRLKKVQKERLYSIYLPWAVKAGLNCKPLINVYWEEILDKDIDELRRELNVTPPPDLRKIRKERAKQRKQFKLKYETYEK</sequence>
<feature type="transit peptide" description="Mitochondrion" evidence="1">
    <location>
        <begin position="1"/>
        <end position="16"/>
    </location>
</feature>
<feature type="chain" id="PRO_0000388115" description="Ubiquinone biosynthesis protein COQ4, mitochondrial">
    <location>
        <begin position="17"/>
        <end position="332"/>
    </location>
</feature>
<feature type="binding site" evidence="1">
    <location>
        <position position="212"/>
    </location>
    <ligand>
        <name>Zn(2+)</name>
        <dbReference type="ChEBI" id="CHEBI:29105"/>
    </ligand>
</feature>
<feature type="binding site" evidence="1">
    <location>
        <position position="213"/>
    </location>
    <ligand>
        <name>Zn(2+)</name>
        <dbReference type="ChEBI" id="CHEBI:29105"/>
    </ligand>
</feature>
<feature type="binding site" evidence="1">
    <location>
        <position position="216"/>
    </location>
    <ligand>
        <name>Zn(2+)</name>
        <dbReference type="ChEBI" id="CHEBI:29105"/>
    </ligand>
</feature>
<feature type="binding site" evidence="1">
    <location>
        <position position="228"/>
    </location>
    <ligand>
        <name>Zn(2+)</name>
        <dbReference type="ChEBI" id="CHEBI:29105"/>
    </ligand>
</feature>